<evidence type="ECO:0000255" key="1">
    <source>
        <dbReference type="HAMAP-Rule" id="MF_00300"/>
    </source>
</evidence>
<proteinExistence type="inferred from homology"/>
<accession>B3PS94</accession>
<dbReference type="EC" id="4.2.3.5" evidence="1"/>
<dbReference type="EMBL" id="CP001074">
    <property type="protein sequence ID" value="ACE90016.1"/>
    <property type="molecule type" value="Genomic_DNA"/>
</dbReference>
<dbReference type="SMR" id="B3PS94"/>
<dbReference type="KEGG" id="rec:RHECIAT_CH0001031"/>
<dbReference type="eggNOG" id="COG0082">
    <property type="taxonomic scope" value="Bacteria"/>
</dbReference>
<dbReference type="HOGENOM" id="CLU_034547_0_0_5"/>
<dbReference type="UniPathway" id="UPA00053">
    <property type="reaction ID" value="UER00090"/>
</dbReference>
<dbReference type="Proteomes" id="UP000008817">
    <property type="component" value="Chromosome"/>
</dbReference>
<dbReference type="GO" id="GO:0005829">
    <property type="term" value="C:cytosol"/>
    <property type="evidence" value="ECO:0007669"/>
    <property type="project" value="TreeGrafter"/>
</dbReference>
<dbReference type="GO" id="GO:0004107">
    <property type="term" value="F:chorismate synthase activity"/>
    <property type="evidence" value="ECO:0007669"/>
    <property type="project" value="UniProtKB-UniRule"/>
</dbReference>
<dbReference type="GO" id="GO:0010181">
    <property type="term" value="F:FMN binding"/>
    <property type="evidence" value="ECO:0007669"/>
    <property type="project" value="TreeGrafter"/>
</dbReference>
<dbReference type="GO" id="GO:0008652">
    <property type="term" value="P:amino acid biosynthetic process"/>
    <property type="evidence" value="ECO:0007669"/>
    <property type="project" value="UniProtKB-KW"/>
</dbReference>
<dbReference type="GO" id="GO:0009073">
    <property type="term" value="P:aromatic amino acid family biosynthetic process"/>
    <property type="evidence" value="ECO:0007669"/>
    <property type="project" value="UniProtKB-KW"/>
</dbReference>
<dbReference type="GO" id="GO:0009423">
    <property type="term" value="P:chorismate biosynthetic process"/>
    <property type="evidence" value="ECO:0007669"/>
    <property type="project" value="UniProtKB-UniRule"/>
</dbReference>
<dbReference type="CDD" id="cd07304">
    <property type="entry name" value="Chorismate_synthase"/>
    <property type="match status" value="1"/>
</dbReference>
<dbReference type="Gene3D" id="3.60.150.10">
    <property type="entry name" value="Chorismate synthase AroC"/>
    <property type="match status" value="1"/>
</dbReference>
<dbReference type="HAMAP" id="MF_00300">
    <property type="entry name" value="Chorismate_synth"/>
    <property type="match status" value="1"/>
</dbReference>
<dbReference type="InterPro" id="IPR000453">
    <property type="entry name" value="Chorismate_synth"/>
</dbReference>
<dbReference type="InterPro" id="IPR035904">
    <property type="entry name" value="Chorismate_synth_AroC_sf"/>
</dbReference>
<dbReference type="InterPro" id="IPR020541">
    <property type="entry name" value="Chorismate_synthase_CS"/>
</dbReference>
<dbReference type="NCBIfam" id="TIGR00033">
    <property type="entry name" value="aroC"/>
    <property type="match status" value="1"/>
</dbReference>
<dbReference type="NCBIfam" id="NF003793">
    <property type="entry name" value="PRK05382.1"/>
    <property type="match status" value="1"/>
</dbReference>
<dbReference type="PANTHER" id="PTHR21085">
    <property type="entry name" value="CHORISMATE SYNTHASE"/>
    <property type="match status" value="1"/>
</dbReference>
<dbReference type="PANTHER" id="PTHR21085:SF0">
    <property type="entry name" value="CHORISMATE SYNTHASE"/>
    <property type="match status" value="1"/>
</dbReference>
<dbReference type="Pfam" id="PF01264">
    <property type="entry name" value="Chorismate_synt"/>
    <property type="match status" value="1"/>
</dbReference>
<dbReference type="PIRSF" id="PIRSF001456">
    <property type="entry name" value="Chorismate_synth"/>
    <property type="match status" value="1"/>
</dbReference>
<dbReference type="SUPFAM" id="SSF103263">
    <property type="entry name" value="Chorismate synthase, AroC"/>
    <property type="match status" value="1"/>
</dbReference>
<dbReference type="PROSITE" id="PS00787">
    <property type="entry name" value="CHORISMATE_SYNTHASE_1"/>
    <property type="match status" value="1"/>
</dbReference>
<dbReference type="PROSITE" id="PS00789">
    <property type="entry name" value="CHORISMATE_SYNTHASE_3"/>
    <property type="match status" value="1"/>
</dbReference>
<sequence>MSHNTFGHLFRVTTWGESHGPALGCVVDGCPPGLRFKLEDLQVWLDKRKPGQSRFVTQRREDDLVKVLSGVMLDADGETMTSTGTPISMLIENTDQRSKDYGEIARQYRPGHADFTYDLKYGIRDYRGGGRSSARETAARVAAGGIARLVVPGVTVRGALVQIGKHKIDRRNWDWDQVGQNPFFSPDAAIVPVWEEYLDGIRKAGSSIGAVVEVVAEGVPAGLGAPIYAKLDQDIASLLMSINAVKGVEIGNGFAAAETSGEDNADEMRMGNDGTPIFLSNNAGGILGGISTGQPVVARFAVKPTSSILTERQSIDADGKNVDVRTKGRHDPCVGIRAVPIGEAMVACAIADHYLRDRGQTGRLK</sequence>
<protein>
    <recommendedName>
        <fullName evidence="1">Chorismate synthase</fullName>
        <shortName evidence="1">CS</shortName>
        <ecNumber evidence="1">4.2.3.5</ecNumber>
    </recommendedName>
    <alternativeName>
        <fullName evidence="1">5-enolpyruvylshikimate-3-phosphate phospholyase</fullName>
    </alternativeName>
</protein>
<gene>
    <name evidence="1" type="primary">aroC</name>
    <name type="ordered locus">RHECIAT_CH0001031</name>
</gene>
<comment type="function">
    <text evidence="1">Catalyzes the anti-1,4-elimination of the C-3 phosphate and the C-6 proR hydrogen from 5-enolpyruvylshikimate-3-phosphate (EPSP) to yield chorismate, which is the branch point compound that serves as the starting substrate for the three terminal pathways of aromatic amino acid biosynthesis. This reaction introduces a second double bond into the aromatic ring system.</text>
</comment>
<comment type="catalytic activity">
    <reaction evidence="1">
        <text>5-O-(1-carboxyvinyl)-3-phosphoshikimate = chorismate + phosphate</text>
        <dbReference type="Rhea" id="RHEA:21020"/>
        <dbReference type="ChEBI" id="CHEBI:29748"/>
        <dbReference type="ChEBI" id="CHEBI:43474"/>
        <dbReference type="ChEBI" id="CHEBI:57701"/>
        <dbReference type="EC" id="4.2.3.5"/>
    </reaction>
</comment>
<comment type="cofactor">
    <cofactor evidence="1">
        <name>FMNH2</name>
        <dbReference type="ChEBI" id="CHEBI:57618"/>
    </cofactor>
    <text evidence="1">Reduced FMN (FMNH(2)).</text>
</comment>
<comment type="pathway">
    <text evidence="1">Metabolic intermediate biosynthesis; chorismate biosynthesis; chorismate from D-erythrose 4-phosphate and phosphoenolpyruvate: step 7/7.</text>
</comment>
<comment type="subunit">
    <text evidence="1">Homotetramer.</text>
</comment>
<comment type="similarity">
    <text evidence="1">Belongs to the chorismate synthase family.</text>
</comment>
<name>AROC_RHIE6</name>
<organism>
    <name type="scientific">Rhizobium etli (strain CIAT 652)</name>
    <dbReference type="NCBI Taxonomy" id="491916"/>
    <lineage>
        <taxon>Bacteria</taxon>
        <taxon>Pseudomonadati</taxon>
        <taxon>Pseudomonadota</taxon>
        <taxon>Alphaproteobacteria</taxon>
        <taxon>Hyphomicrobiales</taxon>
        <taxon>Rhizobiaceae</taxon>
        <taxon>Rhizobium/Agrobacterium group</taxon>
        <taxon>Rhizobium</taxon>
    </lineage>
</organism>
<keyword id="KW-0028">Amino-acid biosynthesis</keyword>
<keyword id="KW-0057">Aromatic amino acid biosynthesis</keyword>
<keyword id="KW-0274">FAD</keyword>
<keyword id="KW-0285">Flavoprotein</keyword>
<keyword id="KW-0288">FMN</keyword>
<keyword id="KW-0456">Lyase</keyword>
<keyword id="KW-0521">NADP</keyword>
<feature type="chain" id="PRO_1000115387" description="Chorismate synthase">
    <location>
        <begin position="1"/>
        <end position="365"/>
    </location>
</feature>
<feature type="binding site" evidence="1">
    <location>
        <position position="48"/>
    </location>
    <ligand>
        <name>NADP(+)</name>
        <dbReference type="ChEBI" id="CHEBI:58349"/>
    </ligand>
</feature>
<feature type="binding site" evidence="1">
    <location>
        <position position="54"/>
    </location>
    <ligand>
        <name>NADP(+)</name>
        <dbReference type="ChEBI" id="CHEBI:58349"/>
    </ligand>
</feature>
<feature type="binding site" evidence="1">
    <location>
        <begin position="131"/>
        <end position="133"/>
    </location>
    <ligand>
        <name>FMN</name>
        <dbReference type="ChEBI" id="CHEBI:58210"/>
    </ligand>
</feature>
<feature type="binding site" evidence="1">
    <location>
        <begin position="243"/>
        <end position="244"/>
    </location>
    <ligand>
        <name>FMN</name>
        <dbReference type="ChEBI" id="CHEBI:58210"/>
    </ligand>
</feature>
<feature type="binding site" evidence="1">
    <location>
        <position position="288"/>
    </location>
    <ligand>
        <name>FMN</name>
        <dbReference type="ChEBI" id="CHEBI:58210"/>
    </ligand>
</feature>
<feature type="binding site" evidence="1">
    <location>
        <begin position="303"/>
        <end position="307"/>
    </location>
    <ligand>
        <name>FMN</name>
        <dbReference type="ChEBI" id="CHEBI:58210"/>
    </ligand>
</feature>
<feature type="binding site" evidence="1">
    <location>
        <position position="329"/>
    </location>
    <ligand>
        <name>FMN</name>
        <dbReference type="ChEBI" id="CHEBI:58210"/>
    </ligand>
</feature>
<reference key="1">
    <citation type="journal article" date="2010" name="Appl. Environ. Microbiol.">
        <title>Conserved symbiotic plasmid DNA sequences in the multireplicon pangenomic structure of Rhizobium etli.</title>
        <authorList>
            <person name="Gonzalez V."/>
            <person name="Acosta J.L."/>
            <person name="Santamaria R.I."/>
            <person name="Bustos P."/>
            <person name="Fernandez J.L."/>
            <person name="Hernandez Gonzalez I.L."/>
            <person name="Diaz R."/>
            <person name="Flores M."/>
            <person name="Palacios R."/>
            <person name="Mora J."/>
            <person name="Davila G."/>
        </authorList>
    </citation>
    <scope>NUCLEOTIDE SEQUENCE [LARGE SCALE GENOMIC DNA]</scope>
    <source>
        <strain>CIAT 652</strain>
    </source>
</reference>